<protein>
    <recommendedName>
        <fullName>Pentatricopeptide repeat-containing protein At1g62350</fullName>
    </recommendedName>
</protein>
<proteinExistence type="evidence at transcript level"/>
<accession>Q1PFH7</accession>
<accession>A0MED8</accession>
<accession>O48799</accession>
<name>PPR89_ARATH</name>
<evidence type="ECO:0000305" key="1"/>
<keyword id="KW-1185">Reference proteome</keyword>
<keyword id="KW-0677">Repeat</keyword>
<comment type="similarity">
    <text evidence="1">Belongs to the PPR family. P subfamily.</text>
</comment>
<comment type="sequence caution" evidence="1">
    <conflict type="erroneous gene model prediction">
        <sequence resource="EMBL-CDS" id="AAF70836"/>
    </conflict>
</comment>
<comment type="sequence caution" evidence="1">
    <conflict type="erroneous termination">
        <sequence resource="EMBL-CDS" id="ABK28447"/>
    </conflict>
    <text>Extended C-terminus.</text>
</comment>
<comment type="online information" name="Pentatricopeptide repeat proteins">
    <link uri="https://ppr.plantenergy.uwa.edu.au"/>
</comment>
<feature type="chain" id="PRO_0000342830" description="Pentatricopeptide repeat-containing protein At1g62350">
    <location>
        <begin position="1"/>
        <end position="196"/>
    </location>
</feature>
<feature type="repeat" description="PPR 1">
    <location>
        <begin position="70"/>
        <end position="104"/>
    </location>
</feature>
<feature type="repeat" description="PPR 2">
    <location>
        <begin position="105"/>
        <end position="139"/>
    </location>
</feature>
<organism>
    <name type="scientific">Arabidopsis thaliana</name>
    <name type="common">Mouse-ear cress</name>
    <dbReference type="NCBI Taxonomy" id="3702"/>
    <lineage>
        <taxon>Eukaryota</taxon>
        <taxon>Viridiplantae</taxon>
        <taxon>Streptophyta</taxon>
        <taxon>Embryophyta</taxon>
        <taxon>Tracheophyta</taxon>
        <taxon>Spermatophyta</taxon>
        <taxon>Magnoliopsida</taxon>
        <taxon>eudicotyledons</taxon>
        <taxon>Gunneridae</taxon>
        <taxon>Pentapetalae</taxon>
        <taxon>rosids</taxon>
        <taxon>malvids</taxon>
        <taxon>Brassicales</taxon>
        <taxon>Brassicaceae</taxon>
        <taxon>Camelineae</taxon>
        <taxon>Arabidopsis</taxon>
    </lineage>
</organism>
<dbReference type="EMBL" id="AC003113">
    <property type="protein sequence ID" value="AAF70836.1"/>
    <property type="status" value="ALT_SEQ"/>
    <property type="molecule type" value="Genomic_DNA"/>
</dbReference>
<dbReference type="EMBL" id="CP002684">
    <property type="protein sequence ID" value="AEE33957.1"/>
    <property type="molecule type" value="Genomic_DNA"/>
</dbReference>
<dbReference type="EMBL" id="DQ446386">
    <property type="protein sequence ID" value="ABE65734.1"/>
    <property type="molecule type" value="mRNA"/>
</dbReference>
<dbReference type="EMBL" id="DQ652908">
    <property type="protein sequence ID" value="ABK28447.1"/>
    <property type="status" value="ALT_SEQ"/>
    <property type="molecule type" value="mRNA"/>
</dbReference>
<dbReference type="PIR" id="T01445">
    <property type="entry name" value="T01445"/>
</dbReference>
<dbReference type="RefSeq" id="NP_176425.2">
    <property type="nucleotide sequence ID" value="NM_104915.4"/>
</dbReference>
<dbReference type="SMR" id="Q1PFH7"/>
<dbReference type="FunCoup" id="Q1PFH7">
    <property type="interactions" value="421"/>
</dbReference>
<dbReference type="PaxDb" id="3702-AT1G62350.1"/>
<dbReference type="ProteomicsDB" id="226335"/>
<dbReference type="EnsemblPlants" id="AT1G62350.1">
    <property type="protein sequence ID" value="AT1G62350.1"/>
    <property type="gene ID" value="AT1G62350"/>
</dbReference>
<dbReference type="GeneID" id="842533"/>
<dbReference type="Gramene" id="AT1G62350.1">
    <property type="protein sequence ID" value="AT1G62350.1"/>
    <property type="gene ID" value="AT1G62350"/>
</dbReference>
<dbReference type="KEGG" id="ath:AT1G62350"/>
<dbReference type="Araport" id="AT1G62350"/>
<dbReference type="TAIR" id="AT1G62350"/>
<dbReference type="eggNOG" id="ENOG502QSKA">
    <property type="taxonomic scope" value="Eukaryota"/>
</dbReference>
<dbReference type="HOGENOM" id="CLU_077248_1_0_1"/>
<dbReference type="InParanoid" id="Q1PFH7"/>
<dbReference type="OMA" id="FLSMKIY"/>
<dbReference type="PhylomeDB" id="Q1PFH7"/>
<dbReference type="PRO" id="PR:Q1PFH7"/>
<dbReference type="Proteomes" id="UP000006548">
    <property type="component" value="Chromosome 1"/>
</dbReference>
<dbReference type="ExpressionAtlas" id="Q1PFH7">
    <property type="expression patterns" value="baseline and differential"/>
</dbReference>
<dbReference type="Gene3D" id="1.25.40.10">
    <property type="entry name" value="Tetratricopeptide repeat domain"/>
    <property type="match status" value="1"/>
</dbReference>
<dbReference type="InterPro" id="IPR002885">
    <property type="entry name" value="Pentatricopeptide_rpt"/>
</dbReference>
<dbReference type="InterPro" id="IPR044795">
    <property type="entry name" value="THA8L-like"/>
</dbReference>
<dbReference type="InterPro" id="IPR011990">
    <property type="entry name" value="TPR-like_helical_dom_sf"/>
</dbReference>
<dbReference type="PANTHER" id="PTHR46870:SF1">
    <property type="entry name" value="OS03G0297700 PROTEIN"/>
    <property type="match status" value="1"/>
</dbReference>
<dbReference type="PANTHER" id="PTHR46870">
    <property type="entry name" value="PROTEIN THYLAKOID ASSEMBLY 8-LIKE, CHLOROPLASTIC"/>
    <property type="match status" value="1"/>
</dbReference>
<dbReference type="Pfam" id="PF01535">
    <property type="entry name" value="PPR"/>
    <property type="match status" value="2"/>
</dbReference>
<dbReference type="PROSITE" id="PS51375">
    <property type="entry name" value="PPR"/>
    <property type="match status" value="2"/>
</dbReference>
<gene>
    <name type="ordered locus">At1g62350</name>
    <name type="ORF">F2401.37</name>
    <name type="ORF">F2401.8</name>
</gene>
<sequence length="196" mass="23287">MSKEGLIAAKELKRLQTQSVRLDRFIGSHVSRLLKSDLVSVLAEFQRQNQVFLCMKLYEVVRREIWYRPDMFFYRDMLMMLARNKKVDETKKVWEDLKKEEVLFDQHTFGDLVRGFLDNELPLEAMRLYGEMRESPDRPLSLPFRVILKGLVPYPELREKVKDDFLELFPGMIVYDPPEDICEDSDEEARTDSDLE</sequence>
<reference key="1">
    <citation type="journal article" date="2000" name="Nature">
        <title>Sequence and analysis of chromosome 1 of the plant Arabidopsis thaliana.</title>
        <authorList>
            <person name="Theologis A."/>
            <person name="Ecker J.R."/>
            <person name="Palm C.J."/>
            <person name="Federspiel N.A."/>
            <person name="Kaul S."/>
            <person name="White O."/>
            <person name="Alonso J."/>
            <person name="Altafi H."/>
            <person name="Araujo R."/>
            <person name="Bowman C.L."/>
            <person name="Brooks S.Y."/>
            <person name="Buehler E."/>
            <person name="Chan A."/>
            <person name="Chao Q."/>
            <person name="Chen H."/>
            <person name="Cheuk R.F."/>
            <person name="Chin C.W."/>
            <person name="Chung M.K."/>
            <person name="Conn L."/>
            <person name="Conway A.B."/>
            <person name="Conway A.R."/>
            <person name="Creasy T.H."/>
            <person name="Dewar K."/>
            <person name="Dunn P."/>
            <person name="Etgu P."/>
            <person name="Feldblyum T.V."/>
            <person name="Feng J.-D."/>
            <person name="Fong B."/>
            <person name="Fujii C.Y."/>
            <person name="Gill J.E."/>
            <person name="Goldsmith A.D."/>
            <person name="Haas B."/>
            <person name="Hansen N.F."/>
            <person name="Hughes B."/>
            <person name="Huizar L."/>
            <person name="Hunter J.L."/>
            <person name="Jenkins J."/>
            <person name="Johnson-Hopson C."/>
            <person name="Khan S."/>
            <person name="Khaykin E."/>
            <person name="Kim C.J."/>
            <person name="Koo H.L."/>
            <person name="Kremenetskaia I."/>
            <person name="Kurtz D.B."/>
            <person name="Kwan A."/>
            <person name="Lam B."/>
            <person name="Langin-Hooper S."/>
            <person name="Lee A."/>
            <person name="Lee J.M."/>
            <person name="Lenz C.A."/>
            <person name="Li J.H."/>
            <person name="Li Y.-P."/>
            <person name="Lin X."/>
            <person name="Liu S.X."/>
            <person name="Liu Z.A."/>
            <person name="Luros J.S."/>
            <person name="Maiti R."/>
            <person name="Marziali A."/>
            <person name="Militscher J."/>
            <person name="Miranda M."/>
            <person name="Nguyen M."/>
            <person name="Nierman W.C."/>
            <person name="Osborne B.I."/>
            <person name="Pai G."/>
            <person name="Peterson J."/>
            <person name="Pham P.K."/>
            <person name="Rizzo M."/>
            <person name="Rooney T."/>
            <person name="Rowley D."/>
            <person name="Sakano H."/>
            <person name="Salzberg S.L."/>
            <person name="Schwartz J.R."/>
            <person name="Shinn P."/>
            <person name="Southwick A.M."/>
            <person name="Sun H."/>
            <person name="Tallon L.J."/>
            <person name="Tambunga G."/>
            <person name="Toriumi M.J."/>
            <person name="Town C.D."/>
            <person name="Utterback T."/>
            <person name="Van Aken S."/>
            <person name="Vaysberg M."/>
            <person name="Vysotskaia V.S."/>
            <person name="Walker M."/>
            <person name="Wu D."/>
            <person name="Yu G."/>
            <person name="Fraser C.M."/>
            <person name="Venter J.C."/>
            <person name="Davis R.W."/>
        </authorList>
    </citation>
    <scope>NUCLEOTIDE SEQUENCE [LARGE SCALE GENOMIC DNA]</scope>
    <source>
        <strain>cv. Columbia</strain>
    </source>
</reference>
<reference key="2">
    <citation type="journal article" date="2017" name="Plant J.">
        <title>Araport11: a complete reannotation of the Arabidopsis thaliana reference genome.</title>
        <authorList>
            <person name="Cheng C.Y."/>
            <person name="Krishnakumar V."/>
            <person name="Chan A.P."/>
            <person name="Thibaud-Nissen F."/>
            <person name="Schobel S."/>
            <person name="Town C.D."/>
        </authorList>
    </citation>
    <scope>GENOME REANNOTATION</scope>
    <source>
        <strain>cv. Columbia</strain>
    </source>
</reference>
<reference key="3">
    <citation type="journal article" date="2006" name="Plant Biotechnol. J.">
        <title>Simultaneous high-throughput recombinational cloning of open reading frames in closed and open configurations.</title>
        <authorList>
            <person name="Underwood B.A."/>
            <person name="Vanderhaeghen R."/>
            <person name="Whitford R."/>
            <person name="Town C.D."/>
            <person name="Hilson P."/>
        </authorList>
    </citation>
    <scope>NUCLEOTIDE SEQUENCE [LARGE SCALE MRNA]</scope>
    <source>
        <strain>cv. Columbia</strain>
    </source>
</reference>
<reference key="4">
    <citation type="journal article" date="2004" name="Plant Cell">
        <title>Genome-wide analysis of Arabidopsis pentatricopeptide repeat proteins reveals their essential role in organelle biogenesis.</title>
        <authorList>
            <person name="Lurin C."/>
            <person name="Andres C."/>
            <person name="Aubourg S."/>
            <person name="Bellaoui M."/>
            <person name="Bitton F."/>
            <person name="Bruyere C."/>
            <person name="Caboche M."/>
            <person name="Debast C."/>
            <person name="Gualberto J."/>
            <person name="Hoffmann B."/>
            <person name="Lecharny A."/>
            <person name="Le Ret M."/>
            <person name="Martin-Magniette M.-L."/>
            <person name="Mireau H."/>
            <person name="Peeters N."/>
            <person name="Renou J.-P."/>
            <person name="Szurek B."/>
            <person name="Taconnat L."/>
            <person name="Small I."/>
        </authorList>
    </citation>
    <scope>GENE FAMILY</scope>
</reference>